<feature type="chain" id="PRO_0000061422" description="Cytochrome b">
    <location>
        <begin position="1"/>
        <end position="380"/>
    </location>
</feature>
<feature type="transmembrane region" description="Helical" evidence="2">
    <location>
        <begin position="33"/>
        <end position="53"/>
    </location>
</feature>
<feature type="transmembrane region" description="Helical" evidence="2">
    <location>
        <begin position="77"/>
        <end position="98"/>
    </location>
</feature>
<feature type="transmembrane region" description="Helical" evidence="2">
    <location>
        <begin position="113"/>
        <end position="133"/>
    </location>
</feature>
<feature type="transmembrane region" description="Helical" evidence="2">
    <location>
        <begin position="178"/>
        <end position="198"/>
    </location>
</feature>
<feature type="transmembrane region" description="Helical" evidence="2">
    <location>
        <begin position="226"/>
        <end position="246"/>
    </location>
</feature>
<feature type="transmembrane region" description="Helical" evidence="2">
    <location>
        <begin position="288"/>
        <end position="308"/>
    </location>
</feature>
<feature type="transmembrane region" description="Helical" evidence="2">
    <location>
        <begin position="320"/>
        <end position="340"/>
    </location>
</feature>
<feature type="transmembrane region" description="Helical" evidence="2">
    <location>
        <begin position="347"/>
        <end position="367"/>
    </location>
</feature>
<feature type="binding site" description="axial binding residue" evidence="2">
    <location>
        <position position="83"/>
    </location>
    <ligand>
        <name>heme b</name>
        <dbReference type="ChEBI" id="CHEBI:60344"/>
        <label>b562</label>
    </ligand>
    <ligandPart>
        <name>Fe</name>
        <dbReference type="ChEBI" id="CHEBI:18248"/>
    </ligandPart>
</feature>
<feature type="binding site" description="axial binding residue" evidence="2">
    <location>
        <position position="97"/>
    </location>
    <ligand>
        <name>heme b</name>
        <dbReference type="ChEBI" id="CHEBI:60344"/>
        <label>b566</label>
    </ligand>
    <ligandPart>
        <name>Fe</name>
        <dbReference type="ChEBI" id="CHEBI:18248"/>
    </ligandPart>
</feature>
<feature type="binding site" description="axial binding residue" evidence="2">
    <location>
        <position position="182"/>
    </location>
    <ligand>
        <name>heme b</name>
        <dbReference type="ChEBI" id="CHEBI:60344"/>
        <label>b562</label>
    </ligand>
    <ligandPart>
        <name>Fe</name>
        <dbReference type="ChEBI" id="CHEBI:18248"/>
    </ligandPart>
</feature>
<feature type="binding site" description="axial binding residue" evidence="2">
    <location>
        <position position="196"/>
    </location>
    <ligand>
        <name>heme b</name>
        <dbReference type="ChEBI" id="CHEBI:60344"/>
        <label>b566</label>
    </ligand>
    <ligandPart>
        <name>Fe</name>
        <dbReference type="ChEBI" id="CHEBI:18248"/>
    </ligandPart>
</feature>
<feature type="binding site" evidence="2">
    <location>
        <position position="201"/>
    </location>
    <ligand>
        <name>a ubiquinone</name>
        <dbReference type="ChEBI" id="CHEBI:16389"/>
    </ligand>
</feature>
<accession>Q95920</accession>
<protein>
    <recommendedName>
        <fullName>Cytochrome b</fullName>
    </recommendedName>
    <alternativeName>
        <fullName>Complex III subunit 3</fullName>
    </alternativeName>
    <alternativeName>
        <fullName>Complex III subunit III</fullName>
    </alternativeName>
    <alternativeName>
        <fullName>Cytochrome b-c1 complex subunit 3</fullName>
    </alternativeName>
    <alternativeName>
        <fullName>Ubiquinol-cytochrome-c reductase complex cytochrome b subunit</fullName>
    </alternativeName>
</protein>
<keyword id="KW-0249">Electron transport</keyword>
<keyword id="KW-0349">Heme</keyword>
<keyword id="KW-0408">Iron</keyword>
<keyword id="KW-0472">Membrane</keyword>
<keyword id="KW-0479">Metal-binding</keyword>
<keyword id="KW-0496">Mitochondrion</keyword>
<keyword id="KW-0999">Mitochondrion inner membrane</keyword>
<keyword id="KW-0679">Respiratory chain</keyword>
<keyword id="KW-0812">Transmembrane</keyword>
<keyword id="KW-1133">Transmembrane helix</keyword>
<keyword id="KW-0813">Transport</keyword>
<keyword id="KW-0830">Ubiquinone</keyword>
<gene>
    <name type="primary">mt-cyb</name>
    <name type="synonym">cob</name>
    <name type="synonym">cytb</name>
    <name type="synonym">mtcyb</name>
</gene>
<sequence length="380" mass="42608">MAIIRKTHPLAKIINSAFIDLPAPSNISSWWNMGSLLGLCLIAQIITGLFLAMHYVSDINSAFSSVAHICRDVNYGWLIRNFHANGASLFFICIYLHIARGLYYGSYLYTETWNMGVILLLLTMMTAFVGYVLPWGQMSFWGATVITNLLSAIPYIGDTLVQWIWGGFSVDKPTLTRFFAFHFILPFAIAAASLVHIVFLHETGSNNPVGINSDADQIPFHPYFTFKDLLGFIILLLIIIMLALLSPNLLNDPGNFTPANPLITPPHIKPEWYFLFAYAILRSIPNKLGGVLALLFSILILMLVPLLHTSKIRSATFRPLFKITLWILAADVLILTWIGGQPVEDPYIIIGQAASILYFLIFLVLMPLSGWLENKMLNRD</sequence>
<geneLocation type="mitochondrion"/>
<comment type="function">
    <text evidence="2">Component of the ubiquinol-cytochrome c reductase complex (complex III or cytochrome b-c1 complex) that is part of the mitochondrial respiratory chain. The b-c1 complex mediates electron transfer from ubiquinol to cytochrome c. Contributes to the generation of a proton gradient across the mitochondrial membrane that is then used for ATP synthesis.</text>
</comment>
<comment type="cofactor">
    <cofactor evidence="2">
        <name>heme b</name>
        <dbReference type="ChEBI" id="CHEBI:60344"/>
    </cofactor>
    <text evidence="2">Binds 2 heme b groups non-covalently.</text>
</comment>
<comment type="subunit">
    <text evidence="2">The cytochrome bc1 complex contains 3 respiratory subunits (MT-CYB, CYC1 and UQCRFS1), 2 core proteins (UQCRC1 and UQCRC2) and probably 6 low-molecular weight proteins.</text>
</comment>
<comment type="subcellular location">
    <subcellularLocation>
        <location evidence="2">Mitochondrion inner membrane</location>
        <topology evidence="2">Multi-pass membrane protein</topology>
    </subcellularLocation>
</comment>
<comment type="miscellaneous">
    <text evidence="1">Heme 1 (or BL or b562) is low-potential and absorbs at about 562 nm, and heme 2 (or BH or b566) is high-potential and absorbs at about 566 nm.</text>
</comment>
<comment type="similarity">
    <text evidence="3 4">Belongs to the cytochrome b family.</text>
</comment>
<comment type="caution">
    <text evidence="2">The full-length protein contains only eight transmembrane helices, not nine as predicted by bioinformatics tools.</text>
</comment>
<dbReference type="EMBL" id="U62532">
    <property type="protein sequence ID" value="AAC60317.1"/>
    <property type="molecule type" value="Genomic_DNA"/>
</dbReference>
<dbReference type="PIR" id="T11466">
    <property type="entry name" value="T11466"/>
</dbReference>
<dbReference type="RefSeq" id="NP_008328.1">
    <property type="nucleotide sequence ID" value="NC_001778.1"/>
</dbReference>
<dbReference type="SMR" id="Q95920"/>
<dbReference type="GeneID" id="808027"/>
<dbReference type="CTD" id="4519"/>
<dbReference type="GO" id="GO:0005743">
    <property type="term" value="C:mitochondrial inner membrane"/>
    <property type="evidence" value="ECO:0007669"/>
    <property type="project" value="UniProtKB-SubCell"/>
</dbReference>
<dbReference type="GO" id="GO:0045275">
    <property type="term" value="C:respiratory chain complex III"/>
    <property type="evidence" value="ECO:0007669"/>
    <property type="project" value="InterPro"/>
</dbReference>
<dbReference type="GO" id="GO:0046872">
    <property type="term" value="F:metal ion binding"/>
    <property type="evidence" value="ECO:0007669"/>
    <property type="project" value="UniProtKB-KW"/>
</dbReference>
<dbReference type="GO" id="GO:0008121">
    <property type="term" value="F:ubiquinol-cytochrome-c reductase activity"/>
    <property type="evidence" value="ECO:0007669"/>
    <property type="project" value="InterPro"/>
</dbReference>
<dbReference type="GO" id="GO:0006122">
    <property type="term" value="P:mitochondrial electron transport, ubiquinol to cytochrome c"/>
    <property type="evidence" value="ECO:0007669"/>
    <property type="project" value="TreeGrafter"/>
</dbReference>
<dbReference type="CDD" id="cd00290">
    <property type="entry name" value="cytochrome_b_C"/>
    <property type="match status" value="1"/>
</dbReference>
<dbReference type="CDD" id="cd00284">
    <property type="entry name" value="Cytochrome_b_N"/>
    <property type="match status" value="1"/>
</dbReference>
<dbReference type="FunFam" id="1.20.810.10:FF:000002">
    <property type="entry name" value="Cytochrome b"/>
    <property type="match status" value="1"/>
</dbReference>
<dbReference type="Gene3D" id="1.20.810.10">
    <property type="entry name" value="Cytochrome Bc1 Complex, Chain C"/>
    <property type="match status" value="1"/>
</dbReference>
<dbReference type="InterPro" id="IPR005798">
    <property type="entry name" value="Cyt_b/b6_C"/>
</dbReference>
<dbReference type="InterPro" id="IPR036150">
    <property type="entry name" value="Cyt_b/b6_C_sf"/>
</dbReference>
<dbReference type="InterPro" id="IPR005797">
    <property type="entry name" value="Cyt_b/b6_N"/>
</dbReference>
<dbReference type="InterPro" id="IPR027387">
    <property type="entry name" value="Cytb/b6-like_sf"/>
</dbReference>
<dbReference type="InterPro" id="IPR030689">
    <property type="entry name" value="Cytochrome_b"/>
</dbReference>
<dbReference type="InterPro" id="IPR048260">
    <property type="entry name" value="Cytochrome_b_C_euk/bac"/>
</dbReference>
<dbReference type="InterPro" id="IPR048259">
    <property type="entry name" value="Cytochrome_b_N_euk/bac"/>
</dbReference>
<dbReference type="InterPro" id="IPR016174">
    <property type="entry name" value="Di-haem_cyt_TM"/>
</dbReference>
<dbReference type="PANTHER" id="PTHR19271">
    <property type="entry name" value="CYTOCHROME B"/>
    <property type="match status" value="1"/>
</dbReference>
<dbReference type="PANTHER" id="PTHR19271:SF16">
    <property type="entry name" value="CYTOCHROME B"/>
    <property type="match status" value="1"/>
</dbReference>
<dbReference type="Pfam" id="PF00032">
    <property type="entry name" value="Cytochrom_B_C"/>
    <property type="match status" value="1"/>
</dbReference>
<dbReference type="Pfam" id="PF00033">
    <property type="entry name" value="Cytochrome_B"/>
    <property type="match status" value="1"/>
</dbReference>
<dbReference type="PIRSF" id="PIRSF038885">
    <property type="entry name" value="COB"/>
    <property type="match status" value="1"/>
</dbReference>
<dbReference type="SUPFAM" id="SSF81648">
    <property type="entry name" value="a domain/subunit of cytochrome bc1 complex (Ubiquinol-cytochrome c reductase)"/>
    <property type="match status" value="1"/>
</dbReference>
<dbReference type="SUPFAM" id="SSF81342">
    <property type="entry name" value="Transmembrane di-heme cytochromes"/>
    <property type="match status" value="1"/>
</dbReference>
<dbReference type="PROSITE" id="PS51003">
    <property type="entry name" value="CYTB_CTER"/>
    <property type="match status" value="1"/>
</dbReference>
<dbReference type="PROSITE" id="PS51002">
    <property type="entry name" value="CYTB_NTER"/>
    <property type="match status" value="1"/>
</dbReference>
<name>CYB_POLOR</name>
<proteinExistence type="inferred from homology"/>
<evidence type="ECO:0000250" key="1"/>
<evidence type="ECO:0000250" key="2">
    <source>
        <dbReference type="UniProtKB" id="P00157"/>
    </source>
</evidence>
<evidence type="ECO:0000255" key="3">
    <source>
        <dbReference type="PROSITE-ProRule" id="PRU00967"/>
    </source>
</evidence>
<evidence type="ECO:0000255" key="4">
    <source>
        <dbReference type="PROSITE-ProRule" id="PRU00968"/>
    </source>
</evidence>
<organism>
    <name type="scientific">Polypterus ornatipinnis</name>
    <name type="common">Ornate bichir</name>
    <dbReference type="NCBI Taxonomy" id="49895"/>
    <lineage>
        <taxon>Eukaryota</taxon>
        <taxon>Metazoa</taxon>
        <taxon>Chordata</taxon>
        <taxon>Craniata</taxon>
        <taxon>Vertebrata</taxon>
        <taxon>Euteleostomi</taxon>
        <taxon>Actinopterygii</taxon>
        <taxon>Polypteriformes</taxon>
        <taxon>Polypteridae</taxon>
        <taxon>Polypterus</taxon>
    </lineage>
</organism>
<reference key="1">
    <citation type="journal article" date="1996" name="Genetics">
        <title>The complete mitochondrial DNA sequence of the bichir (Polypterus ornatipinnis), a basal ray-finned fish: ancient establishment of the consensus vertebrate gene order.</title>
        <authorList>
            <person name="Noack K."/>
            <person name="Zardoya R."/>
            <person name="Meyer A."/>
        </authorList>
    </citation>
    <scope>NUCLEOTIDE SEQUENCE [GENOMIC DNA]</scope>
</reference>